<organism>
    <name type="scientific">Mycobacterium tuberculosis (strain ATCC 25618 / H37Rv)</name>
    <dbReference type="NCBI Taxonomy" id="83332"/>
    <lineage>
        <taxon>Bacteria</taxon>
        <taxon>Bacillati</taxon>
        <taxon>Actinomycetota</taxon>
        <taxon>Actinomycetes</taxon>
        <taxon>Mycobacteriales</taxon>
        <taxon>Mycobacteriaceae</taxon>
        <taxon>Mycobacterium</taxon>
        <taxon>Mycobacterium tuberculosis complex</taxon>
    </lineage>
</organism>
<evidence type="ECO:0000303" key="1">
    <source>
    </source>
</evidence>
<evidence type="ECO:0000305" key="2"/>
<evidence type="ECO:0000305" key="3">
    <source>
    </source>
</evidence>
<reference key="1">
    <citation type="journal article" date="1998" name="Nature">
        <title>Deciphering the biology of Mycobacterium tuberculosis from the complete genome sequence.</title>
        <authorList>
            <person name="Cole S.T."/>
            <person name="Brosch R."/>
            <person name="Parkhill J."/>
            <person name="Garnier T."/>
            <person name="Churcher C.M."/>
            <person name="Harris D.E."/>
            <person name="Gordon S.V."/>
            <person name="Eiglmeier K."/>
            <person name="Gas S."/>
            <person name="Barry C.E. III"/>
            <person name="Tekaia F."/>
            <person name="Badcock K."/>
            <person name="Basham D."/>
            <person name="Brown D."/>
            <person name="Chillingworth T."/>
            <person name="Connor R."/>
            <person name="Davies R.M."/>
            <person name="Devlin K."/>
            <person name="Feltwell T."/>
            <person name="Gentles S."/>
            <person name="Hamlin N."/>
            <person name="Holroyd S."/>
            <person name="Hornsby T."/>
            <person name="Jagels K."/>
            <person name="Krogh A."/>
            <person name="McLean J."/>
            <person name="Moule S."/>
            <person name="Murphy L.D."/>
            <person name="Oliver S."/>
            <person name="Osborne J."/>
            <person name="Quail M.A."/>
            <person name="Rajandream M.A."/>
            <person name="Rogers J."/>
            <person name="Rutter S."/>
            <person name="Seeger K."/>
            <person name="Skelton S."/>
            <person name="Squares S."/>
            <person name="Squares R."/>
            <person name="Sulston J.E."/>
            <person name="Taylor K."/>
            <person name="Whitehead S."/>
            <person name="Barrell B.G."/>
        </authorList>
    </citation>
    <scope>NUCLEOTIDE SEQUENCE [LARGE SCALE GENOMIC DNA]</scope>
    <source>
        <strain>ATCC 25618 / H37Rv</strain>
    </source>
</reference>
<reference key="2">
    <citation type="journal article" date="2009" name="PLoS Pathog.">
        <title>Systematic genetic nomenclature for type VII secretion systems.</title>
        <authorList>
            <person name="Bitter W."/>
            <person name="Houben E.N."/>
            <person name="Bottai D."/>
            <person name="Brodin P."/>
            <person name="Brown E.J."/>
            <person name="Cox J.S."/>
            <person name="Derbyshire K."/>
            <person name="Fortune S.M."/>
            <person name="Gao L.Y."/>
            <person name="Liu J."/>
            <person name="Gey van Pittius N.C."/>
            <person name="Pym A.S."/>
            <person name="Rubin E.J."/>
            <person name="Sherman D.R."/>
            <person name="Cole S.T."/>
            <person name="Brosch R."/>
        </authorList>
    </citation>
    <scope>NOMENCLATURE</scope>
</reference>
<reference key="3">
    <citation type="journal article" date="2011" name="Mol. Cell. Proteomics">
        <title>Proteogenomic analysis of Mycobacterium tuberculosis by high resolution mass spectrometry.</title>
        <authorList>
            <person name="Kelkar D.S."/>
            <person name="Kumar D."/>
            <person name="Kumar P."/>
            <person name="Balakrishnan L."/>
            <person name="Muthusamy B."/>
            <person name="Yadav A.K."/>
            <person name="Shrivastava P."/>
            <person name="Marimuthu A."/>
            <person name="Anand S."/>
            <person name="Sundaram H."/>
            <person name="Kingsbury R."/>
            <person name="Harsha H.C."/>
            <person name="Nair B."/>
            <person name="Prasad T.S."/>
            <person name="Chauhan D.S."/>
            <person name="Katoch K."/>
            <person name="Katoch V.M."/>
            <person name="Kumar P."/>
            <person name="Chaerkady R."/>
            <person name="Ramachandran S."/>
            <person name="Dash D."/>
            <person name="Pandey A."/>
        </authorList>
    </citation>
    <scope>IDENTIFICATION BY MASS SPECTROMETRY [LARGE SCALE ANALYSIS]</scope>
    <source>
        <strain>ATCC 25618 / H37Rv</strain>
    </source>
</reference>
<gene>
    <name evidence="1" type="primary">esxC</name>
    <name type="ordered locus">Rv3890c</name>
    <name type="ORF">MTCY15F10.22</name>
</gene>
<protein>
    <recommendedName>
        <fullName evidence="2">ESAT-6-like protein EsxC</fullName>
    </recommendedName>
</protein>
<accession>P9WNI1</accession>
<accession>L0TE32</accession>
<accession>O05454</accession>
<comment type="subcellular location">
    <subcellularLocation>
        <location evidence="3">Secreted</location>
    </subcellularLocation>
    <text evidence="3">Probably secreted via the ESX-2 / type VII secretion system (T7SS).</text>
</comment>
<comment type="similarity">
    <text evidence="3">Belongs to the WXG100 family. ESAT-6 subfamily.</text>
</comment>
<keyword id="KW-1185">Reference proteome</keyword>
<keyword id="KW-0964">Secreted</keyword>
<feature type="chain" id="PRO_0000167818" description="ESAT-6-like protein EsxC">
    <location>
        <begin position="1"/>
        <end position="95"/>
    </location>
</feature>
<sequence length="95" mass="9920">MSDQITYNPGAVSDFASDVGSRAGQLHMIYEDTASKTNALQEFFAGHGAQGFFDAQAQMLSGLQGLIETVGQHGTTTGHVLDNAIGTDQAIAGLF</sequence>
<name>ESXC_MYCTU</name>
<dbReference type="EMBL" id="AL123456">
    <property type="protein sequence ID" value="CCP46719.1"/>
    <property type="molecule type" value="Genomic_DNA"/>
</dbReference>
<dbReference type="PIR" id="C70598">
    <property type="entry name" value="C70598"/>
</dbReference>
<dbReference type="RefSeq" id="NP_218407.1">
    <property type="nucleotide sequence ID" value="NC_000962.3"/>
</dbReference>
<dbReference type="RefSeq" id="WP_003899750.1">
    <property type="nucleotide sequence ID" value="NZ_NVQJ01000005.1"/>
</dbReference>
<dbReference type="SMR" id="P9WNI1"/>
<dbReference type="STRING" id="83332.Rv3890c"/>
<dbReference type="PaxDb" id="83332-Rv3890c"/>
<dbReference type="DNASU" id="886222"/>
<dbReference type="GeneID" id="886222"/>
<dbReference type="KEGG" id="mtu:Rv3890c"/>
<dbReference type="KEGG" id="mtv:RVBD_3890c"/>
<dbReference type="TubercuList" id="Rv3890c"/>
<dbReference type="eggNOG" id="ENOG50329MM">
    <property type="taxonomic scope" value="Bacteria"/>
</dbReference>
<dbReference type="InParanoid" id="P9WNI1"/>
<dbReference type="OrthoDB" id="4762157at2"/>
<dbReference type="Proteomes" id="UP000001584">
    <property type="component" value="Chromosome"/>
</dbReference>
<dbReference type="GO" id="GO:0005576">
    <property type="term" value="C:extracellular region"/>
    <property type="evidence" value="ECO:0007669"/>
    <property type="project" value="UniProtKB-SubCell"/>
</dbReference>
<dbReference type="Gene3D" id="1.10.287.1060">
    <property type="entry name" value="ESAT-6-like"/>
    <property type="match status" value="1"/>
</dbReference>
<dbReference type="InterPro" id="IPR036689">
    <property type="entry name" value="ESAT-6-like_sf"/>
</dbReference>
<dbReference type="InterPro" id="IPR010310">
    <property type="entry name" value="T7SS_ESAT-6-like"/>
</dbReference>
<dbReference type="Pfam" id="PF06013">
    <property type="entry name" value="WXG100"/>
    <property type="match status" value="1"/>
</dbReference>
<dbReference type="SUPFAM" id="SSF140453">
    <property type="entry name" value="EsxAB dimer-like"/>
    <property type="match status" value="1"/>
</dbReference>
<proteinExistence type="evidence at protein level"/>